<reference key="1">
    <citation type="submission" date="2009-01" db="EMBL/GenBank/DDBJ databases">
        <title>Complete sequence of Geobacter sp. FRC-32.</title>
        <authorList>
            <consortium name="US DOE Joint Genome Institute"/>
            <person name="Lucas S."/>
            <person name="Copeland A."/>
            <person name="Lapidus A."/>
            <person name="Glavina del Rio T."/>
            <person name="Dalin E."/>
            <person name="Tice H."/>
            <person name="Bruce D."/>
            <person name="Goodwin L."/>
            <person name="Pitluck S."/>
            <person name="Saunders E."/>
            <person name="Brettin T."/>
            <person name="Detter J.C."/>
            <person name="Han C."/>
            <person name="Larimer F."/>
            <person name="Land M."/>
            <person name="Hauser L."/>
            <person name="Kyrpides N."/>
            <person name="Ovchinnikova G."/>
            <person name="Kostka J."/>
            <person name="Richardson P."/>
        </authorList>
    </citation>
    <scope>NUCLEOTIDE SEQUENCE [LARGE SCALE GENOMIC DNA]</scope>
    <source>
        <strain>DSM 22248 / JCM 15807 / FRC-32</strain>
    </source>
</reference>
<sequence length="384" mass="41482">MKNLTILGSTGSIGVSTLEIVAAHPEKFKIIALTAGENIDLLKEQIDAFAPQLVAVKNEELALKLEGMLSCRKTAVMYGVEGMIAAATASDTNMVVAAIVGAAGLLPTSAAIEAGKDIALANKETLVTAGRLIMDMVKTRGVKLYPVDSEHSAVFQSLQGHRKEDVRRIILTASGGPFLNLSGEKLAQVTVKDALNHPNWSMGQKITIDSASMMNKGLEVIEASWLFDMPAEKISVNIHPQSIIHSMVEYNDGCVMAQMGIPDMKAPIAYALTYPGRVPTGVKPLDLTTLSGLTFFNPDVVRFPALQLAYRAMKDGESMPTVMNAANEVAVAAFLSGRIKFTDIARSIEKTMDLHHPRSLSSIEDVIEIDQWGRERCSELLQSF</sequence>
<feature type="chain" id="PRO_1000124093" description="1-deoxy-D-xylulose 5-phosphate reductoisomerase">
    <location>
        <begin position="1"/>
        <end position="384"/>
    </location>
</feature>
<feature type="binding site" evidence="1">
    <location>
        <position position="10"/>
    </location>
    <ligand>
        <name>NADPH</name>
        <dbReference type="ChEBI" id="CHEBI:57783"/>
    </ligand>
</feature>
<feature type="binding site" evidence="1">
    <location>
        <position position="11"/>
    </location>
    <ligand>
        <name>NADPH</name>
        <dbReference type="ChEBI" id="CHEBI:57783"/>
    </ligand>
</feature>
<feature type="binding site" evidence="1">
    <location>
        <position position="12"/>
    </location>
    <ligand>
        <name>NADPH</name>
        <dbReference type="ChEBI" id="CHEBI:57783"/>
    </ligand>
</feature>
<feature type="binding site" evidence="1">
    <location>
        <position position="13"/>
    </location>
    <ligand>
        <name>NADPH</name>
        <dbReference type="ChEBI" id="CHEBI:57783"/>
    </ligand>
</feature>
<feature type="binding site" evidence="1">
    <location>
        <position position="36"/>
    </location>
    <ligand>
        <name>NADPH</name>
        <dbReference type="ChEBI" id="CHEBI:57783"/>
    </ligand>
</feature>
<feature type="binding site" evidence="1">
    <location>
        <position position="38"/>
    </location>
    <ligand>
        <name>NADPH</name>
        <dbReference type="ChEBI" id="CHEBI:57783"/>
    </ligand>
</feature>
<feature type="binding site" evidence="1">
    <location>
        <position position="122"/>
    </location>
    <ligand>
        <name>NADPH</name>
        <dbReference type="ChEBI" id="CHEBI:57783"/>
    </ligand>
</feature>
<feature type="binding site" evidence="1">
    <location>
        <position position="123"/>
    </location>
    <ligand>
        <name>1-deoxy-D-xylulose 5-phosphate</name>
        <dbReference type="ChEBI" id="CHEBI:57792"/>
    </ligand>
</feature>
<feature type="binding site" evidence="1">
    <location>
        <position position="124"/>
    </location>
    <ligand>
        <name>NADPH</name>
        <dbReference type="ChEBI" id="CHEBI:57783"/>
    </ligand>
</feature>
<feature type="binding site" evidence="1">
    <location>
        <position position="148"/>
    </location>
    <ligand>
        <name>Mn(2+)</name>
        <dbReference type="ChEBI" id="CHEBI:29035"/>
    </ligand>
</feature>
<feature type="binding site" evidence="1">
    <location>
        <position position="149"/>
    </location>
    <ligand>
        <name>1-deoxy-D-xylulose 5-phosphate</name>
        <dbReference type="ChEBI" id="CHEBI:57792"/>
    </ligand>
</feature>
<feature type="binding site" evidence="1">
    <location>
        <position position="150"/>
    </location>
    <ligand>
        <name>1-deoxy-D-xylulose 5-phosphate</name>
        <dbReference type="ChEBI" id="CHEBI:57792"/>
    </ligand>
</feature>
<feature type="binding site" evidence="1">
    <location>
        <position position="150"/>
    </location>
    <ligand>
        <name>Mn(2+)</name>
        <dbReference type="ChEBI" id="CHEBI:29035"/>
    </ligand>
</feature>
<feature type="binding site" evidence="1">
    <location>
        <position position="174"/>
    </location>
    <ligand>
        <name>1-deoxy-D-xylulose 5-phosphate</name>
        <dbReference type="ChEBI" id="CHEBI:57792"/>
    </ligand>
</feature>
<feature type="binding site" evidence="1">
    <location>
        <position position="197"/>
    </location>
    <ligand>
        <name>1-deoxy-D-xylulose 5-phosphate</name>
        <dbReference type="ChEBI" id="CHEBI:57792"/>
    </ligand>
</feature>
<feature type="binding site" evidence="1">
    <location>
        <position position="203"/>
    </location>
    <ligand>
        <name>NADPH</name>
        <dbReference type="ChEBI" id="CHEBI:57783"/>
    </ligand>
</feature>
<feature type="binding site" evidence="1">
    <location>
        <position position="210"/>
    </location>
    <ligand>
        <name>1-deoxy-D-xylulose 5-phosphate</name>
        <dbReference type="ChEBI" id="CHEBI:57792"/>
    </ligand>
</feature>
<feature type="binding site" evidence="1">
    <location>
        <position position="215"/>
    </location>
    <ligand>
        <name>1-deoxy-D-xylulose 5-phosphate</name>
        <dbReference type="ChEBI" id="CHEBI:57792"/>
    </ligand>
</feature>
<feature type="binding site" evidence="1">
    <location>
        <position position="216"/>
    </location>
    <ligand>
        <name>1-deoxy-D-xylulose 5-phosphate</name>
        <dbReference type="ChEBI" id="CHEBI:57792"/>
    </ligand>
</feature>
<feature type="binding site" evidence="1">
    <location>
        <position position="219"/>
    </location>
    <ligand>
        <name>1-deoxy-D-xylulose 5-phosphate</name>
        <dbReference type="ChEBI" id="CHEBI:57792"/>
    </ligand>
</feature>
<feature type="binding site" evidence="1">
    <location>
        <position position="219"/>
    </location>
    <ligand>
        <name>Mn(2+)</name>
        <dbReference type="ChEBI" id="CHEBI:29035"/>
    </ligand>
</feature>
<protein>
    <recommendedName>
        <fullName evidence="1">1-deoxy-D-xylulose 5-phosphate reductoisomerase</fullName>
        <shortName evidence="1">DXP reductoisomerase</shortName>
        <ecNumber evidence="1">1.1.1.267</ecNumber>
    </recommendedName>
    <alternativeName>
        <fullName evidence="1">1-deoxyxylulose-5-phosphate reductoisomerase</fullName>
    </alternativeName>
    <alternativeName>
        <fullName evidence="1">2-C-methyl-D-erythritol 4-phosphate synthase</fullName>
    </alternativeName>
</protein>
<keyword id="KW-0414">Isoprene biosynthesis</keyword>
<keyword id="KW-0464">Manganese</keyword>
<keyword id="KW-0479">Metal-binding</keyword>
<keyword id="KW-0521">NADP</keyword>
<keyword id="KW-0560">Oxidoreductase</keyword>
<keyword id="KW-1185">Reference proteome</keyword>
<accession>B9M5C0</accession>
<evidence type="ECO:0000255" key="1">
    <source>
        <dbReference type="HAMAP-Rule" id="MF_00183"/>
    </source>
</evidence>
<comment type="function">
    <text evidence="1">Catalyzes the NADPH-dependent rearrangement and reduction of 1-deoxy-D-xylulose-5-phosphate (DXP) to 2-C-methyl-D-erythritol 4-phosphate (MEP).</text>
</comment>
<comment type="catalytic activity">
    <reaction evidence="1">
        <text>2-C-methyl-D-erythritol 4-phosphate + NADP(+) = 1-deoxy-D-xylulose 5-phosphate + NADPH + H(+)</text>
        <dbReference type="Rhea" id="RHEA:13717"/>
        <dbReference type="ChEBI" id="CHEBI:15378"/>
        <dbReference type="ChEBI" id="CHEBI:57783"/>
        <dbReference type="ChEBI" id="CHEBI:57792"/>
        <dbReference type="ChEBI" id="CHEBI:58262"/>
        <dbReference type="ChEBI" id="CHEBI:58349"/>
        <dbReference type="EC" id="1.1.1.267"/>
    </reaction>
    <physiologicalReaction direction="right-to-left" evidence="1">
        <dbReference type="Rhea" id="RHEA:13719"/>
    </physiologicalReaction>
</comment>
<comment type="cofactor">
    <cofactor evidence="1">
        <name>Mg(2+)</name>
        <dbReference type="ChEBI" id="CHEBI:18420"/>
    </cofactor>
    <cofactor evidence="1">
        <name>Mn(2+)</name>
        <dbReference type="ChEBI" id="CHEBI:29035"/>
    </cofactor>
</comment>
<comment type="pathway">
    <text evidence="1">Isoprenoid biosynthesis; isopentenyl diphosphate biosynthesis via DXP pathway; isopentenyl diphosphate from 1-deoxy-D-xylulose 5-phosphate: step 1/6.</text>
</comment>
<comment type="similarity">
    <text evidence="1">Belongs to the DXR family.</text>
</comment>
<gene>
    <name evidence="1" type="primary">dxr</name>
    <name type="ordered locus">Geob_1516</name>
</gene>
<name>DXR_GEODF</name>
<dbReference type="EC" id="1.1.1.267" evidence="1"/>
<dbReference type="EMBL" id="CP001390">
    <property type="protein sequence ID" value="ACM19875.1"/>
    <property type="molecule type" value="Genomic_DNA"/>
</dbReference>
<dbReference type="RefSeq" id="WP_012646604.1">
    <property type="nucleotide sequence ID" value="NC_011979.1"/>
</dbReference>
<dbReference type="SMR" id="B9M5C0"/>
<dbReference type="STRING" id="316067.Geob_1516"/>
<dbReference type="KEGG" id="geo:Geob_1516"/>
<dbReference type="eggNOG" id="COG0743">
    <property type="taxonomic scope" value="Bacteria"/>
</dbReference>
<dbReference type="HOGENOM" id="CLU_035714_4_0_7"/>
<dbReference type="OrthoDB" id="9806546at2"/>
<dbReference type="UniPathway" id="UPA00056">
    <property type="reaction ID" value="UER00092"/>
</dbReference>
<dbReference type="Proteomes" id="UP000007721">
    <property type="component" value="Chromosome"/>
</dbReference>
<dbReference type="GO" id="GO:0030604">
    <property type="term" value="F:1-deoxy-D-xylulose-5-phosphate reductoisomerase activity"/>
    <property type="evidence" value="ECO:0007669"/>
    <property type="project" value="UniProtKB-UniRule"/>
</dbReference>
<dbReference type="GO" id="GO:0030145">
    <property type="term" value="F:manganese ion binding"/>
    <property type="evidence" value="ECO:0007669"/>
    <property type="project" value="TreeGrafter"/>
</dbReference>
<dbReference type="GO" id="GO:0070402">
    <property type="term" value="F:NADPH binding"/>
    <property type="evidence" value="ECO:0007669"/>
    <property type="project" value="InterPro"/>
</dbReference>
<dbReference type="GO" id="GO:0051484">
    <property type="term" value="P:isopentenyl diphosphate biosynthetic process, methylerythritol 4-phosphate pathway involved in terpenoid biosynthetic process"/>
    <property type="evidence" value="ECO:0007669"/>
    <property type="project" value="TreeGrafter"/>
</dbReference>
<dbReference type="FunFam" id="3.40.50.720:FF:000045">
    <property type="entry name" value="1-deoxy-D-xylulose 5-phosphate reductoisomerase"/>
    <property type="match status" value="1"/>
</dbReference>
<dbReference type="Gene3D" id="1.10.1740.10">
    <property type="match status" value="1"/>
</dbReference>
<dbReference type="Gene3D" id="3.40.50.720">
    <property type="entry name" value="NAD(P)-binding Rossmann-like Domain"/>
    <property type="match status" value="1"/>
</dbReference>
<dbReference type="HAMAP" id="MF_00183">
    <property type="entry name" value="DXP_reductoisom"/>
    <property type="match status" value="1"/>
</dbReference>
<dbReference type="InterPro" id="IPR003821">
    <property type="entry name" value="DXP_reductoisomerase"/>
</dbReference>
<dbReference type="InterPro" id="IPR013644">
    <property type="entry name" value="DXP_reductoisomerase_C"/>
</dbReference>
<dbReference type="InterPro" id="IPR013512">
    <property type="entry name" value="DXP_reductoisomerase_N"/>
</dbReference>
<dbReference type="InterPro" id="IPR026877">
    <property type="entry name" value="DXPR_C"/>
</dbReference>
<dbReference type="InterPro" id="IPR036169">
    <property type="entry name" value="DXPR_C_sf"/>
</dbReference>
<dbReference type="InterPro" id="IPR036291">
    <property type="entry name" value="NAD(P)-bd_dom_sf"/>
</dbReference>
<dbReference type="NCBIfam" id="TIGR00243">
    <property type="entry name" value="Dxr"/>
    <property type="match status" value="1"/>
</dbReference>
<dbReference type="NCBIfam" id="NF009114">
    <property type="entry name" value="PRK12464.1"/>
    <property type="match status" value="1"/>
</dbReference>
<dbReference type="PANTHER" id="PTHR30525">
    <property type="entry name" value="1-DEOXY-D-XYLULOSE 5-PHOSPHATE REDUCTOISOMERASE"/>
    <property type="match status" value="1"/>
</dbReference>
<dbReference type="PANTHER" id="PTHR30525:SF0">
    <property type="entry name" value="1-DEOXY-D-XYLULOSE 5-PHOSPHATE REDUCTOISOMERASE, CHLOROPLASTIC"/>
    <property type="match status" value="1"/>
</dbReference>
<dbReference type="Pfam" id="PF08436">
    <property type="entry name" value="DXP_redisom_C"/>
    <property type="match status" value="1"/>
</dbReference>
<dbReference type="Pfam" id="PF02670">
    <property type="entry name" value="DXP_reductoisom"/>
    <property type="match status" value="1"/>
</dbReference>
<dbReference type="Pfam" id="PF13288">
    <property type="entry name" value="DXPR_C"/>
    <property type="match status" value="1"/>
</dbReference>
<dbReference type="PIRSF" id="PIRSF006205">
    <property type="entry name" value="Dxp_reductismrs"/>
    <property type="match status" value="1"/>
</dbReference>
<dbReference type="SUPFAM" id="SSF69055">
    <property type="entry name" value="1-deoxy-D-xylulose-5-phosphate reductoisomerase, C-terminal domain"/>
    <property type="match status" value="1"/>
</dbReference>
<dbReference type="SUPFAM" id="SSF55347">
    <property type="entry name" value="Glyceraldehyde-3-phosphate dehydrogenase-like, C-terminal domain"/>
    <property type="match status" value="1"/>
</dbReference>
<dbReference type="SUPFAM" id="SSF51735">
    <property type="entry name" value="NAD(P)-binding Rossmann-fold domains"/>
    <property type="match status" value="1"/>
</dbReference>
<proteinExistence type="inferred from homology"/>
<organism>
    <name type="scientific">Geotalea daltonii (strain DSM 22248 / JCM 15807 / FRC-32)</name>
    <name type="common">Geobacter daltonii</name>
    <dbReference type="NCBI Taxonomy" id="316067"/>
    <lineage>
        <taxon>Bacteria</taxon>
        <taxon>Pseudomonadati</taxon>
        <taxon>Thermodesulfobacteriota</taxon>
        <taxon>Desulfuromonadia</taxon>
        <taxon>Geobacterales</taxon>
        <taxon>Geobacteraceae</taxon>
        <taxon>Geotalea</taxon>
    </lineage>
</organism>